<accession>A5V5Y8</accession>
<protein>
    <recommendedName>
        <fullName evidence="1">Small ribosomal subunit protein uS8</fullName>
    </recommendedName>
    <alternativeName>
        <fullName evidence="2">30S ribosomal protein S8</fullName>
    </alternativeName>
</protein>
<dbReference type="EMBL" id="CP000699">
    <property type="protein sequence ID" value="ABQ67704.1"/>
    <property type="molecule type" value="Genomic_DNA"/>
</dbReference>
<dbReference type="SMR" id="A5V5Y8"/>
<dbReference type="STRING" id="392499.Swit_1339"/>
<dbReference type="PaxDb" id="392499-Swit_1339"/>
<dbReference type="KEGG" id="swi:Swit_1339"/>
<dbReference type="eggNOG" id="COG0096">
    <property type="taxonomic scope" value="Bacteria"/>
</dbReference>
<dbReference type="HOGENOM" id="CLU_098428_0_0_5"/>
<dbReference type="OrthoDB" id="9802617at2"/>
<dbReference type="Proteomes" id="UP000001989">
    <property type="component" value="Chromosome"/>
</dbReference>
<dbReference type="GO" id="GO:1990904">
    <property type="term" value="C:ribonucleoprotein complex"/>
    <property type="evidence" value="ECO:0007669"/>
    <property type="project" value="UniProtKB-KW"/>
</dbReference>
<dbReference type="GO" id="GO:0005840">
    <property type="term" value="C:ribosome"/>
    <property type="evidence" value="ECO:0007669"/>
    <property type="project" value="UniProtKB-KW"/>
</dbReference>
<dbReference type="GO" id="GO:0019843">
    <property type="term" value="F:rRNA binding"/>
    <property type="evidence" value="ECO:0007669"/>
    <property type="project" value="UniProtKB-UniRule"/>
</dbReference>
<dbReference type="GO" id="GO:0003735">
    <property type="term" value="F:structural constituent of ribosome"/>
    <property type="evidence" value="ECO:0007669"/>
    <property type="project" value="InterPro"/>
</dbReference>
<dbReference type="GO" id="GO:0006412">
    <property type="term" value="P:translation"/>
    <property type="evidence" value="ECO:0007669"/>
    <property type="project" value="UniProtKB-UniRule"/>
</dbReference>
<dbReference type="FunFam" id="3.30.1490.10:FF:000001">
    <property type="entry name" value="30S ribosomal protein S8"/>
    <property type="match status" value="1"/>
</dbReference>
<dbReference type="Gene3D" id="3.30.1370.30">
    <property type="match status" value="1"/>
</dbReference>
<dbReference type="Gene3D" id="3.30.1490.10">
    <property type="match status" value="1"/>
</dbReference>
<dbReference type="HAMAP" id="MF_01302_B">
    <property type="entry name" value="Ribosomal_uS8_B"/>
    <property type="match status" value="1"/>
</dbReference>
<dbReference type="InterPro" id="IPR000630">
    <property type="entry name" value="Ribosomal_uS8"/>
</dbReference>
<dbReference type="InterPro" id="IPR047863">
    <property type="entry name" value="Ribosomal_uS8_CS"/>
</dbReference>
<dbReference type="InterPro" id="IPR035987">
    <property type="entry name" value="Ribosomal_uS8_sf"/>
</dbReference>
<dbReference type="NCBIfam" id="NF001109">
    <property type="entry name" value="PRK00136.1"/>
    <property type="match status" value="1"/>
</dbReference>
<dbReference type="PANTHER" id="PTHR11758">
    <property type="entry name" value="40S RIBOSOMAL PROTEIN S15A"/>
    <property type="match status" value="1"/>
</dbReference>
<dbReference type="Pfam" id="PF00410">
    <property type="entry name" value="Ribosomal_S8"/>
    <property type="match status" value="1"/>
</dbReference>
<dbReference type="SUPFAM" id="SSF56047">
    <property type="entry name" value="Ribosomal protein S8"/>
    <property type="match status" value="1"/>
</dbReference>
<dbReference type="PROSITE" id="PS00053">
    <property type="entry name" value="RIBOSOMAL_S8"/>
    <property type="match status" value="1"/>
</dbReference>
<name>RS8_RHIWR</name>
<evidence type="ECO:0000255" key="1">
    <source>
        <dbReference type="HAMAP-Rule" id="MF_01302"/>
    </source>
</evidence>
<evidence type="ECO:0000305" key="2"/>
<sequence length="131" mass="14394">MALTDPLGDLLTRIRNGQRARKDSVLSPASKLRARVLDVLQREGYIRGYSEEDLAGHSGLRIELKYFEGQPAIQHVARVSKPGRRVYSGSKDLPRVRNGLGITIVSTPRGVLSDAEAREQNVGGEVLAEVF</sequence>
<feature type="chain" id="PRO_1000051801" description="Small ribosomal subunit protein uS8">
    <location>
        <begin position="1"/>
        <end position="131"/>
    </location>
</feature>
<comment type="function">
    <text evidence="1">One of the primary rRNA binding proteins, it binds directly to 16S rRNA central domain where it helps coordinate assembly of the platform of the 30S subunit.</text>
</comment>
<comment type="subunit">
    <text evidence="1">Part of the 30S ribosomal subunit. Contacts proteins S5 and S12.</text>
</comment>
<comment type="similarity">
    <text evidence="1">Belongs to the universal ribosomal protein uS8 family.</text>
</comment>
<reference key="1">
    <citation type="journal article" date="2010" name="J. Bacteriol.">
        <title>Genome sequence of the dioxin-mineralizing bacterium Sphingomonas wittichii RW1.</title>
        <authorList>
            <person name="Miller T.R."/>
            <person name="Delcher A.L."/>
            <person name="Salzberg S.L."/>
            <person name="Saunders E."/>
            <person name="Detter J.C."/>
            <person name="Halden R.U."/>
        </authorList>
    </citation>
    <scope>NUCLEOTIDE SEQUENCE [LARGE SCALE GENOMIC DNA]</scope>
    <source>
        <strain>DSM 6014 / CCUG 31198 / JCM 15750 / NBRC 105917 / EY 4224 / RW1</strain>
    </source>
</reference>
<organism>
    <name type="scientific">Rhizorhabdus wittichii (strain DSM 6014 / CCUG 31198 / JCM 15750 / NBRC 105917 / EY 4224 / RW1)</name>
    <name type="common">Sphingomonas wittichii</name>
    <dbReference type="NCBI Taxonomy" id="392499"/>
    <lineage>
        <taxon>Bacteria</taxon>
        <taxon>Pseudomonadati</taxon>
        <taxon>Pseudomonadota</taxon>
        <taxon>Alphaproteobacteria</taxon>
        <taxon>Sphingomonadales</taxon>
        <taxon>Sphingomonadaceae</taxon>
        <taxon>Rhizorhabdus</taxon>
    </lineage>
</organism>
<proteinExistence type="inferred from homology"/>
<gene>
    <name evidence="1" type="primary">rpsH</name>
    <name type="ordered locus">Swit_1339</name>
</gene>
<keyword id="KW-1185">Reference proteome</keyword>
<keyword id="KW-0687">Ribonucleoprotein</keyword>
<keyword id="KW-0689">Ribosomal protein</keyword>
<keyword id="KW-0694">RNA-binding</keyword>
<keyword id="KW-0699">rRNA-binding</keyword>